<name>OTNK_METRJ</name>
<feature type="chain" id="PRO_0000439682" description="3-oxo-tetronate kinase">
    <location>
        <begin position="1"/>
        <end position="424"/>
    </location>
</feature>
<feature type="binding site" evidence="1">
    <location>
        <position position="264"/>
    </location>
    <ligand>
        <name>ATP</name>
        <dbReference type="ChEBI" id="CHEBI:30616"/>
    </ligand>
</feature>
<feature type="binding site" evidence="1">
    <location>
        <begin position="363"/>
        <end position="366"/>
    </location>
    <ligand>
        <name>ATP</name>
        <dbReference type="ChEBI" id="CHEBI:30616"/>
    </ligand>
</feature>
<feature type="binding site" evidence="1">
    <location>
        <position position="408"/>
    </location>
    <ligand>
        <name>ATP</name>
        <dbReference type="ChEBI" id="CHEBI:30616"/>
    </ligand>
</feature>
<proteinExistence type="evidence at protein level"/>
<evidence type="ECO:0000250" key="1">
    <source>
        <dbReference type="UniProtKB" id="Q0KBC8"/>
    </source>
</evidence>
<evidence type="ECO:0000269" key="2">
    <source>
    </source>
</evidence>
<evidence type="ECO:0000303" key="3">
    <source>
    </source>
</evidence>
<evidence type="ECO:0000305" key="4"/>
<evidence type="ECO:0000312" key="5">
    <source>
        <dbReference type="EMBL" id="ACB23141.1"/>
    </source>
</evidence>
<accession>B1M1V6</accession>
<gene>
    <name evidence="3" type="primary">otnK</name>
    <name evidence="5" type="ordered locus">Mrad2831_1132</name>
</gene>
<dbReference type="EC" id="2.7.1.217" evidence="2"/>
<dbReference type="EMBL" id="CP001001">
    <property type="protein sequence ID" value="ACB23141.1"/>
    <property type="molecule type" value="Genomic_DNA"/>
</dbReference>
<dbReference type="RefSeq" id="WP_012318131.1">
    <property type="nucleotide sequence ID" value="NC_010505.1"/>
</dbReference>
<dbReference type="SMR" id="B1M1V6"/>
<dbReference type="STRING" id="426355.Mrad2831_1132"/>
<dbReference type="GeneID" id="6137149"/>
<dbReference type="KEGG" id="mrd:Mrad2831_1132"/>
<dbReference type="PATRIC" id="fig|426355.14.peg.1176"/>
<dbReference type="eggNOG" id="COG3395">
    <property type="taxonomic scope" value="Bacteria"/>
</dbReference>
<dbReference type="HOGENOM" id="CLU_029424_1_0_5"/>
<dbReference type="OrthoDB" id="191465at2"/>
<dbReference type="Proteomes" id="UP000006589">
    <property type="component" value="Chromosome"/>
</dbReference>
<dbReference type="GO" id="GO:0005524">
    <property type="term" value="F:ATP binding"/>
    <property type="evidence" value="ECO:0007669"/>
    <property type="project" value="UniProtKB-KW"/>
</dbReference>
<dbReference type="GO" id="GO:0016301">
    <property type="term" value="F:kinase activity"/>
    <property type="evidence" value="ECO:0007669"/>
    <property type="project" value="UniProtKB-KW"/>
</dbReference>
<dbReference type="Gene3D" id="3.40.980.20">
    <property type="entry name" value="Four-carbon acid sugar kinase, nucleotide binding domain"/>
    <property type="match status" value="1"/>
</dbReference>
<dbReference type="Gene3D" id="3.40.50.10840">
    <property type="entry name" value="Putative sugar-binding, N-terminal domain"/>
    <property type="match status" value="1"/>
</dbReference>
<dbReference type="InterPro" id="IPR010737">
    <property type="entry name" value="4-carb_acid_sugar_kinase_N"/>
</dbReference>
<dbReference type="InterPro" id="IPR037051">
    <property type="entry name" value="4-carb_acid_sugar_kinase_N_sf"/>
</dbReference>
<dbReference type="InterPro" id="IPR031475">
    <property type="entry name" value="NBD_C"/>
</dbReference>
<dbReference type="InterPro" id="IPR042213">
    <property type="entry name" value="NBD_C_sf"/>
</dbReference>
<dbReference type="InterPro" id="IPR050007">
    <property type="entry name" value="OtnK"/>
</dbReference>
<dbReference type="NCBIfam" id="NF043035">
    <property type="entry name" value="OxoTetrKin"/>
    <property type="match status" value="1"/>
</dbReference>
<dbReference type="Pfam" id="PF17042">
    <property type="entry name" value="NBD_C"/>
    <property type="match status" value="1"/>
</dbReference>
<dbReference type="Pfam" id="PF07005">
    <property type="entry name" value="SBD_N"/>
    <property type="match status" value="1"/>
</dbReference>
<dbReference type="SUPFAM" id="SSF142764">
    <property type="entry name" value="YgbK-like"/>
    <property type="match status" value="1"/>
</dbReference>
<reference key="1">
    <citation type="submission" date="2008-03" db="EMBL/GenBank/DDBJ databases">
        <title>Complete sequence of chromosome of Methylobacterium radiotolerans JCM 2831.</title>
        <authorList>
            <consortium name="US DOE Joint Genome Institute"/>
            <person name="Copeland A."/>
            <person name="Lucas S."/>
            <person name="Lapidus A."/>
            <person name="Glavina del Rio T."/>
            <person name="Dalin E."/>
            <person name="Tice H."/>
            <person name="Bruce D."/>
            <person name="Goodwin L."/>
            <person name="Pitluck S."/>
            <person name="Kiss H."/>
            <person name="Brettin T."/>
            <person name="Detter J.C."/>
            <person name="Han C."/>
            <person name="Kuske C.R."/>
            <person name="Schmutz J."/>
            <person name="Larimer F."/>
            <person name="Land M."/>
            <person name="Hauser L."/>
            <person name="Kyrpides N."/>
            <person name="Mikhailova N."/>
            <person name="Marx C.J."/>
            <person name="Richardson P."/>
        </authorList>
    </citation>
    <scope>NUCLEOTIDE SEQUENCE [LARGE SCALE GENOMIC DNA]</scope>
    <source>
        <strain>ATCC 27329 / DSM 1819 / JCM 2831 / NBRC 15690 / NCIMB 10815 / 0-1</strain>
    </source>
</reference>
<reference key="2">
    <citation type="journal article" date="2016" name="Proc. Natl. Acad. Sci. U.S.A.">
        <title>Assignment of function to a domain of unknown function: DUF1537 is a new kinase family in catabolic pathways for acid sugars.</title>
        <authorList>
            <person name="Zhang X."/>
            <person name="Carter M.S."/>
            <person name="Vetting M.W."/>
            <person name="San Francisco B."/>
            <person name="Zhao S."/>
            <person name="Al-Obaidi N.F."/>
            <person name="Solbiati J.O."/>
            <person name="Thiaville J.J."/>
            <person name="de Crecy-Lagard V."/>
            <person name="Jacobson M.P."/>
            <person name="Almo S.C."/>
            <person name="Gerlt J.A."/>
        </authorList>
    </citation>
    <scope>FUNCTION</scope>
    <scope>CATALYTIC ACTIVITY</scope>
    <source>
        <strain>ATCC 27329 / DSM 1819 / JCM 2831 / NBRC 15690 / NCIMB 10815 / 0-1</strain>
    </source>
</reference>
<organism>
    <name type="scientific">Methylobacterium radiotolerans (strain ATCC 27329 / DSM 1819 / JCM 2831 / NBRC 15690 / NCIMB 10815 / 0-1)</name>
    <dbReference type="NCBI Taxonomy" id="426355"/>
    <lineage>
        <taxon>Bacteria</taxon>
        <taxon>Pseudomonadati</taxon>
        <taxon>Pseudomonadota</taxon>
        <taxon>Alphaproteobacteria</taxon>
        <taxon>Hyphomicrobiales</taxon>
        <taxon>Methylobacteriaceae</taxon>
        <taxon>Methylobacterium</taxon>
    </lineage>
</organism>
<sequence length="424" mass="42893">MSLALGCVADDYTGASDLANTLTKAGLRTIQTIGVPEAGRALPEADAVVVALKSRSIPADQAVARSREAERWLRARGAAHVMFKVCSTFDSTDAGNIGPVMDALRADAGETVALVTPAFPETGRSVYQGNLFVGSVPLNESPLKDHPLNPMRDANLVRVLGRQSRSPVGLIDTATVARGAEAVAARLDALAQEGKGAAIADAIFDSDLEVLGRAILDRKFSVGASGLGLGLARALAADGRGTRDAAGAAVGEPVGGASACLAGSCSQATLQQVAAAEAIMPVLRLDPARLLAGDDVVAEALAFAEERLASGPVLIATSAPPEAVRALQAAHGVDAAGHAIEAALAAIAEGLVARGVRRLVVAGGETSGAVVDRLGLTAFLLGPEIAAGVPVLRTAGRPEPMLLALKSGNFGGADFFGRALDMMA</sequence>
<keyword id="KW-0067">ATP-binding</keyword>
<keyword id="KW-0119">Carbohydrate metabolism</keyword>
<keyword id="KW-0418">Kinase</keyword>
<keyword id="KW-0547">Nucleotide-binding</keyword>
<keyword id="KW-0808">Transferase</keyword>
<comment type="function">
    <text evidence="2">Catalyzes the ATP-dependent phosphorylation of 3-oxo-tetronate to 3-oxo-tetronate 4-phosphate.</text>
</comment>
<comment type="catalytic activity">
    <reaction evidence="2">
        <text>3-dehydro-L-erythronate + ATP = 3-dehydro-4-O-phospho-L-erythronate + ADP + H(+)</text>
        <dbReference type="Rhea" id="RHEA:52552"/>
        <dbReference type="ChEBI" id="CHEBI:15378"/>
        <dbReference type="ChEBI" id="CHEBI:30616"/>
        <dbReference type="ChEBI" id="CHEBI:136592"/>
        <dbReference type="ChEBI" id="CHEBI:136670"/>
        <dbReference type="ChEBI" id="CHEBI:456216"/>
        <dbReference type="EC" id="2.7.1.217"/>
    </reaction>
</comment>
<comment type="catalytic activity">
    <reaction evidence="2">
        <text>3-dehydro-D-erythronate + ATP = 3-dehydro-4-O-phospho-D-erythronate + ADP + H(+)</text>
        <dbReference type="Rhea" id="RHEA:52556"/>
        <dbReference type="ChEBI" id="CHEBI:15378"/>
        <dbReference type="ChEBI" id="CHEBI:30616"/>
        <dbReference type="ChEBI" id="CHEBI:57958"/>
        <dbReference type="ChEBI" id="CHEBI:136593"/>
        <dbReference type="ChEBI" id="CHEBI:456216"/>
        <dbReference type="EC" id="2.7.1.217"/>
    </reaction>
</comment>
<comment type="similarity">
    <text evidence="4">Belongs to the four-carbon acid sugar kinase family.</text>
</comment>
<protein>
    <recommendedName>
        <fullName evidence="3">3-oxo-tetronate kinase</fullName>
        <ecNumber evidence="2">2.7.1.217</ecNumber>
    </recommendedName>
    <alternativeName>
        <fullName evidence="4">3-dehydrotetronate 4-kinase</fullName>
    </alternativeName>
</protein>